<comment type="catalytic activity">
    <reaction evidence="1">
        <text>tRNA(Arg) + L-arginine + ATP = L-arginyl-tRNA(Arg) + AMP + diphosphate</text>
        <dbReference type="Rhea" id="RHEA:20301"/>
        <dbReference type="Rhea" id="RHEA-COMP:9658"/>
        <dbReference type="Rhea" id="RHEA-COMP:9673"/>
        <dbReference type="ChEBI" id="CHEBI:30616"/>
        <dbReference type="ChEBI" id="CHEBI:32682"/>
        <dbReference type="ChEBI" id="CHEBI:33019"/>
        <dbReference type="ChEBI" id="CHEBI:78442"/>
        <dbReference type="ChEBI" id="CHEBI:78513"/>
        <dbReference type="ChEBI" id="CHEBI:456215"/>
        <dbReference type="EC" id="6.1.1.19"/>
    </reaction>
</comment>
<comment type="subunit">
    <text evidence="1">Monomer.</text>
</comment>
<comment type="subcellular location">
    <subcellularLocation>
        <location evidence="1">Cytoplasm</location>
    </subcellularLocation>
</comment>
<comment type="similarity">
    <text evidence="1">Belongs to the class-I aminoacyl-tRNA synthetase family.</text>
</comment>
<sequence>MASVTSLTASVHQRLADALSAALPEAGSADPLLRRSDRADFQANGILALAKKAKANPRDLATQVVARVESGEVIKDIEVSGPGFLNITITDQAITRNLAARYEDGERLGVPLAEHPGTTVIDYAQPNVAKEMHVGHLRSAVIGDAVVQILEFTGENVVRRHHIGDWGTQFGMLIQYLIEHPHELDHKGAAEVSGEEAMSNLNRLYKAARTLFDSDEEFKTRARRRVVDLQAGEPETLAMWQKFVDESKIYFYSVFDKLDLEIRDPDVVGESGYNDMLDETCRLLEESGVAVRSDGALCVFFDDVKGPDGNPVPLIVKKSDGGYGYAATDLSAIRDRVFNLKANSLIYVVDARQSLHFKMVFETARRAGWLNDDVQAQQLAFGTVLGKDGKPFKTREGETIRLVDLLDEAIDRATAVVREKAEKVGLSEQEIEENGRYVGIGAVKYADLSTSAVRDYKFDLDQMVSLNGDTSVYLQYAYARIRSIFGKAGDRTPLAHPELELAPAERALGLHLDRFGETLDEVAAEYAPHKLAAYLYQLASLYTTFYDQCPVIKPAPAQEVAENRLFLCDLTARTLHQGMALLGIRTPERL</sequence>
<name>SYR_STRAW</name>
<reference key="1">
    <citation type="journal article" date="2001" name="Proc. Natl. Acad. Sci. U.S.A.">
        <title>Genome sequence of an industrial microorganism Streptomyces avermitilis: deducing the ability of producing secondary metabolites.</title>
        <authorList>
            <person name="Omura S."/>
            <person name="Ikeda H."/>
            <person name="Ishikawa J."/>
            <person name="Hanamoto A."/>
            <person name="Takahashi C."/>
            <person name="Shinose M."/>
            <person name="Takahashi Y."/>
            <person name="Horikawa H."/>
            <person name="Nakazawa H."/>
            <person name="Osonoe T."/>
            <person name="Kikuchi H."/>
            <person name="Shiba T."/>
            <person name="Sakaki Y."/>
            <person name="Hattori M."/>
        </authorList>
    </citation>
    <scope>NUCLEOTIDE SEQUENCE [LARGE SCALE GENOMIC DNA]</scope>
    <source>
        <strain>ATCC 31267 / DSM 46492 / JCM 5070 / NBRC 14893 / NCIMB 12804 / NRRL 8165 / MA-4680</strain>
    </source>
</reference>
<reference key="2">
    <citation type="journal article" date="2003" name="Nat. Biotechnol.">
        <title>Complete genome sequence and comparative analysis of the industrial microorganism Streptomyces avermitilis.</title>
        <authorList>
            <person name="Ikeda H."/>
            <person name="Ishikawa J."/>
            <person name="Hanamoto A."/>
            <person name="Shinose M."/>
            <person name="Kikuchi H."/>
            <person name="Shiba T."/>
            <person name="Sakaki Y."/>
            <person name="Hattori M."/>
            <person name="Omura S."/>
        </authorList>
    </citation>
    <scope>NUCLEOTIDE SEQUENCE [LARGE SCALE GENOMIC DNA]</scope>
    <source>
        <strain>ATCC 31267 / DSM 46492 / JCM 5070 / NBRC 14893 / NCIMB 12804 / NRRL 8165 / MA-4680</strain>
    </source>
</reference>
<feature type="chain" id="PRO_0000151615" description="Arginine--tRNA ligase">
    <location>
        <begin position="1"/>
        <end position="590"/>
    </location>
</feature>
<feature type="short sequence motif" description="'HIGH' region">
    <location>
        <begin position="126"/>
        <end position="136"/>
    </location>
</feature>
<proteinExistence type="inferred from homology"/>
<organism>
    <name type="scientific">Streptomyces avermitilis (strain ATCC 31267 / DSM 46492 / JCM 5070 / NBRC 14893 / NCIMB 12804 / NRRL 8165 / MA-4680)</name>
    <dbReference type="NCBI Taxonomy" id="227882"/>
    <lineage>
        <taxon>Bacteria</taxon>
        <taxon>Bacillati</taxon>
        <taxon>Actinomycetota</taxon>
        <taxon>Actinomycetes</taxon>
        <taxon>Kitasatosporales</taxon>
        <taxon>Streptomycetaceae</taxon>
        <taxon>Streptomyces</taxon>
    </lineage>
</organism>
<protein>
    <recommendedName>
        <fullName evidence="1">Arginine--tRNA ligase</fullName>
        <ecNumber evidence="1">6.1.1.19</ecNumber>
    </recommendedName>
    <alternativeName>
        <fullName evidence="1">Arginyl-tRNA synthetase</fullName>
        <shortName evidence="1">ArgRS</shortName>
    </alternativeName>
</protein>
<gene>
    <name evidence="1" type="primary">argS</name>
    <name type="ordered locus">SAV_4748</name>
</gene>
<keyword id="KW-0030">Aminoacyl-tRNA synthetase</keyword>
<keyword id="KW-0067">ATP-binding</keyword>
<keyword id="KW-0963">Cytoplasm</keyword>
<keyword id="KW-0436">Ligase</keyword>
<keyword id="KW-0547">Nucleotide-binding</keyword>
<keyword id="KW-0648">Protein biosynthesis</keyword>
<keyword id="KW-1185">Reference proteome</keyword>
<evidence type="ECO:0000255" key="1">
    <source>
        <dbReference type="HAMAP-Rule" id="MF_00123"/>
    </source>
</evidence>
<dbReference type="EC" id="6.1.1.19" evidence="1"/>
<dbReference type="EMBL" id="BA000030">
    <property type="protein sequence ID" value="BAC72460.1"/>
    <property type="molecule type" value="Genomic_DNA"/>
</dbReference>
<dbReference type="RefSeq" id="WP_010986171.1">
    <property type="nucleotide sequence ID" value="NZ_JZJK01000077.1"/>
</dbReference>
<dbReference type="SMR" id="Q82E68"/>
<dbReference type="GeneID" id="41541832"/>
<dbReference type="KEGG" id="sma:SAVERM_4748"/>
<dbReference type="eggNOG" id="COG0018">
    <property type="taxonomic scope" value="Bacteria"/>
</dbReference>
<dbReference type="HOGENOM" id="CLU_006406_5_1_11"/>
<dbReference type="OrthoDB" id="9803211at2"/>
<dbReference type="Proteomes" id="UP000000428">
    <property type="component" value="Chromosome"/>
</dbReference>
<dbReference type="GO" id="GO:0005737">
    <property type="term" value="C:cytoplasm"/>
    <property type="evidence" value="ECO:0007669"/>
    <property type="project" value="UniProtKB-SubCell"/>
</dbReference>
<dbReference type="GO" id="GO:0004814">
    <property type="term" value="F:arginine-tRNA ligase activity"/>
    <property type="evidence" value="ECO:0007669"/>
    <property type="project" value="UniProtKB-UniRule"/>
</dbReference>
<dbReference type="GO" id="GO:0005524">
    <property type="term" value="F:ATP binding"/>
    <property type="evidence" value="ECO:0007669"/>
    <property type="project" value="UniProtKB-UniRule"/>
</dbReference>
<dbReference type="GO" id="GO:0006420">
    <property type="term" value="P:arginyl-tRNA aminoacylation"/>
    <property type="evidence" value="ECO:0007669"/>
    <property type="project" value="UniProtKB-UniRule"/>
</dbReference>
<dbReference type="CDD" id="cd07956">
    <property type="entry name" value="Anticodon_Ia_Arg"/>
    <property type="match status" value="1"/>
</dbReference>
<dbReference type="CDD" id="cd00671">
    <property type="entry name" value="ArgRS_core"/>
    <property type="match status" value="1"/>
</dbReference>
<dbReference type="FunFam" id="3.40.50.620:FF:000030">
    <property type="entry name" value="Arginine--tRNA ligase"/>
    <property type="match status" value="1"/>
</dbReference>
<dbReference type="FunFam" id="1.10.730.10:FF:000006">
    <property type="entry name" value="Arginyl-tRNA synthetase 2, mitochondrial"/>
    <property type="match status" value="1"/>
</dbReference>
<dbReference type="Gene3D" id="3.30.1360.70">
    <property type="entry name" value="Arginyl tRNA synthetase N-terminal domain"/>
    <property type="match status" value="1"/>
</dbReference>
<dbReference type="Gene3D" id="3.40.50.620">
    <property type="entry name" value="HUPs"/>
    <property type="match status" value="1"/>
</dbReference>
<dbReference type="Gene3D" id="1.10.730.10">
    <property type="entry name" value="Isoleucyl-tRNA Synthetase, Domain 1"/>
    <property type="match status" value="1"/>
</dbReference>
<dbReference type="HAMAP" id="MF_00123">
    <property type="entry name" value="Arg_tRNA_synth"/>
    <property type="match status" value="1"/>
</dbReference>
<dbReference type="InterPro" id="IPR001412">
    <property type="entry name" value="aa-tRNA-synth_I_CS"/>
</dbReference>
<dbReference type="InterPro" id="IPR001278">
    <property type="entry name" value="Arg-tRNA-ligase"/>
</dbReference>
<dbReference type="InterPro" id="IPR005148">
    <property type="entry name" value="Arg-tRNA-synth_N"/>
</dbReference>
<dbReference type="InterPro" id="IPR036695">
    <property type="entry name" value="Arg-tRNA-synth_N_sf"/>
</dbReference>
<dbReference type="InterPro" id="IPR035684">
    <property type="entry name" value="ArgRS_core"/>
</dbReference>
<dbReference type="InterPro" id="IPR008909">
    <property type="entry name" value="DALR_anticod-bd"/>
</dbReference>
<dbReference type="InterPro" id="IPR014729">
    <property type="entry name" value="Rossmann-like_a/b/a_fold"/>
</dbReference>
<dbReference type="InterPro" id="IPR009080">
    <property type="entry name" value="tRNAsynth_Ia_anticodon-bd"/>
</dbReference>
<dbReference type="NCBIfam" id="TIGR00456">
    <property type="entry name" value="argS"/>
    <property type="match status" value="1"/>
</dbReference>
<dbReference type="PANTHER" id="PTHR11956:SF5">
    <property type="entry name" value="ARGININE--TRNA LIGASE, CYTOPLASMIC"/>
    <property type="match status" value="1"/>
</dbReference>
<dbReference type="PANTHER" id="PTHR11956">
    <property type="entry name" value="ARGINYL-TRNA SYNTHETASE"/>
    <property type="match status" value="1"/>
</dbReference>
<dbReference type="Pfam" id="PF03485">
    <property type="entry name" value="Arg_tRNA_synt_N"/>
    <property type="match status" value="1"/>
</dbReference>
<dbReference type="Pfam" id="PF05746">
    <property type="entry name" value="DALR_1"/>
    <property type="match status" value="1"/>
</dbReference>
<dbReference type="Pfam" id="PF00750">
    <property type="entry name" value="tRNA-synt_1d"/>
    <property type="match status" value="1"/>
</dbReference>
<dbReference type="PRINTS" id="PR01038">
    <property type="entry name" value="TRNASYNTHARG"/>
</dbReference>
<dbReference type="SMART" id="SM01016">
    <property type="entry name" value="Arg_tRNA_synt_N"/>
    <property type="match status" value="1"/>
</dbReference>
<dbReference type="SMART" id="SM00836">
    <property type="entry name" value="DALR_1"/>
    <property type="match status" value="1"/>
</dbReference>
<dbReference type="SUPFAM" id="SSF47323">
    <property type="entry name" value="Anticodon-binding domain of a subclass of class I aminoacyl-tRNA synthetases"/>
    <property type="match status" value="1"/>
</dbReference>
<dbReference type="SUPFAM" id="SSF55190">
    <property type="entry name" value="Arginyl-tRNA synthetase (ArgRS), N-terminal 'additional' domain"/>
    <property type="match status" value="1"/>
</dbReference>
<dbReference type="SUPFAM" id="SSF52374">
    <property type="entry name" value="Nucleotidylyl transferase"/>
    <property type="match status" value="1"/>
</dbReference>
<dbReference type="PROSITE" id="PS00178">
    <property type="entry name" value="AA_TRNA_LIGASE_I"/>
    <property type="match status" value="1"/>
</dbReference>
<accession>Q82E68</accession>